<evidence type="ECO:0000303" key="1">
    <source>
    </source>
</evidence>
<evidence type="ECO:0000305" key="2"/>
<evidence type="ECO:0000305" key="3">
    <source>
    </source>
</evidence>
<evidence type="ECO:0000305" key="4">
    <source ref="2"/>
</evidence>
<evidence type="ECO:0007744" key="5">
    <source>
        <dbReference type="PDB" id="4V6U"/>
    </source>
</evidence>
<evidence type="ECO:0007744" key="6">
    <source>
        <dbReference type="PDB" id="5JB3"/>
    </source>
</evidence>
<evidence type="ECO:0007744" key="7">
    <source>
        <dbReference type="PDB" id="5JBH"/>
    </source>
</evidence>
<evidence type="ECO:0007829" key="8">
    <source>
        <dbReference type="PDB" id="6SWC"/>
    </source>
</evidence>
<evidence type="ECO:0007829" key="9">
    <source>
        <dbReference type="PDB" id="7ZHG"/>
    </source>
</evidence>
<sequence length="37" mass="5001">MKRRPRKWKKKGRMRWKWIKKRIRRLKRQRKKERGLI</sequence>
<gene>
    <name evidence="1" type="primary">rpl41e</name>
    <name type="ordered locus">PF1018</name>
</gene>
<feature type="chain" id="PRO_0000198076" description="Small ribosomal subunit protein eS32">
    <location>
        <begin position="1"/>
        <end position="37"/>
    </location>
</feature>
<feature type="helix" evidence="9">
    <location>
        <begin position="5"/>
        <end position="8"/>
    </location>
</feature>
<feature type="strand" evidence="8">
    <location>
        <begin position="11"/>
        <end position="13"/>
    </location>
</feature>
<feature type="helix" evidence="9">
    <location>
        <begin position="16"/>
        <end position="35"/>
    </location>
</feature>
<keyword id="KW-0002">3D-structure</keyword>
<keyword id="KW-1185">Reference proteome</keyword>
<keyword id="KW-0687">Ribonucleoprotein</keyword>
<keyword id="KW-0689">Ribosomal protein</keyword>
<accession>Q8U232</accession>
<protein>
    <recommendedName>
        <fullName evidence="4">Small ribosomal subunit protein eS32</fullName>
    </recommendedName>
    <alternativeName>
        <fullName evidence="1">50S ribosomal protein L41e</fullName>
    </alternativeName>
    <alternativeName>
        <fullName evidence="2">Large ribosomal subunit protein eL41</fullName>
    </alternativeName>
</protein>
<dbReference type="EMBL" id="AE009950">
    <property type="protein sequence ID" value="AAL81142.1"/>
    <property type="molecule type" value="Genomic_DNA"/>
</dbReference>
<dbReference type="PDB" id="4V4N">
    <property type="method" value="EM"/>
    <property type="resolution" value="9.00 A"/>
    <property type="chains" value="h=14-37"/>
</dbReference>
<dbReference type="PDB" id="4V6U">
    <property type="method" value="EM"/>
    <property type="resolution" value="6.60 A"/>
    <property type="chains" value="Bh=14-37"/>
</dbReference>
<dbReference type="PDB" id="5JB3">
    <property type="method" value="EM"/>
    <property type="resolution" value="5.34 A"/>
    <property type="chains" value="0=14-35"/>
</dbReference>
<dbReference type="PDB" id="5JBH">
    <property type="method" value="EM"/>
    <property type="resolution" value="5.34 A"/>
    <property type="chains" value="0=14-35"/>
</dbReference>
<dbReference type="PDB" id="6SW9">
    <property type="method" value="EM"/>
    <property type="resolution" value="4.20 A"/>
    <property type="chains" value="0=1-36"/>
</dbReference>
<dbReference type="PDB" id="6SWC">
    <property type="method" value="EM"/>
    <property type="resolution" value="3.30 A"/>
    <property type="chains" value="0=1-36"/>
</dbReference>
<dbReference type="PDB" id="6SWD">
    <property type="method" value="EM"/>
    <property type="resolution" value="3.20 A"/>
    <property type="chains" value="0=1-36"/>
</dbReference>
<dbReference type="PDB" id="7ZAG">
    <property type="method" value="EM"/>
    <property type="resolution" value="2.77 A"/>
    <property type="chains" value="0=1-36"/>
</dbReference>
<dbReference type="PDB" id="7ZAH">
    <property type="method" value="EM"/>
    <property type="resolution" value="2.70 A"/>
    <property type="chains" value="0=1-36"/>
</dbReference>
<dbReference type="PDB" id="7ZAI">
    <property type="method" value="EM"/>
    <property type="resolution" value="2.60 A"/>
    <property type="chains" value="0=1-36"/>
</dbReference>
<dbReference type="PDB" id="7ZHG">
    <property type="method" value="EM"/>
    <property type="resolution" value="2.25 A"/>
    <property type="chains" value="0=1-36"/>
</dbReference>
<dbReference type="PDBsum" id="4V4N"/>
<dbReference type="PDBsum" id="4V6U"/>
<dbReference type="PDBsum" id="5JB3"/>
<dbReference type="PDBsum" id="5JBH"/>
<dbReference type="PDBsum" id="6SW9"/>
<dbReference type="PDBsum" id="6SWC"/>
<dbReference type="PDBsum" id="6SWD"/>
<dbReference type="PDBsum" id="7ZAG"/>
<dbReference type="PDBsum" id="7ZAH"/>
<dbReference type="PDBsum" id="7ZAI"/>
<dbReference type="PDBsum" id="7ZHG"/>
<dbReference type="EMDB" id="EMD-10320"/>
<dbReference type="EMDB" id="EMD-14579"/>
<dbReference type="EMDB" id="EMD-14580"/>
<dbReference type="EMDB" id="EMD-14581"/>
<dbReference type="EMDB" id="EMD-14731"/>
<dbReference type="EMDB" id="EMD-50611"/>
<dbReference type="EMDB" id="EMD-50612"/>
<dbReference type="EMDB" id="EMD-50613"/>
<dbReference type="EMDB" id="EMD-8148"/>
<dbReference type="EMDB" id="EMD-8149"/>
<dbReference type="SMR" id="Q8U232"/>
<dbReference type="STRING" id="186497.PF1018"/>
<dbReference type="PaxDb" id="186497-PF1018"/>
<dbReference type="KEGG" id="pfu:PF1018"/>
<dbReference type="PATRIC" id="fig|186497.12.peg.1079"/>
<dbReference type="eggNOG" id="arCOG06624">
    <property type="taxonomic scope" value="Archaea"/>
</dbReference>
<dbReference type="HOGENOM" id="CLU_219591_0_0_2"/>
<dbReference type="Proteomes" id="UP000001013">
    <property type="component" value="Chromosome"/>
</dbReference>
<dbReference type="GO" id="GO:1990904">
    <property type="term" value="C:ribonucleoprotein complex"/>
    <property type="evidence" value="ECO:0007669"/>
    <property type="project" value="UniProtKB-KW"/>
</dbReference>
<dbReference type="GO" id="GO:0005840">
    <property type="term" value="C:ribosome"/>
    <property type="evidence" value="ECO:0007669"/>
    <property type="project" value="UniProtKB-KW"/>
</dbReference>
<reference key="1">
    <citation type="journal article" date="1999" name="Genetics">
        <title>Divergence of the hyperthermophilic archaea Pyrococcus furiosus and P. horikoshii inferred from complete genomic sequences.</title>
        <authorList>
            <person name="Maeder D.L."/>
            <person name="Weiss R.B."/>
            <person name="Dunn D.M."/>
            <person name="Cherry J.L."/>
            <person name="Gonzalez J.M."/>
            <person name="DiRuggiero J."/>
            <person name="Robb F.T."/>
        </authorList>
    </citation>
    <scope>NUCLEOTIDE SEQUENCE [LARGE SCALE GENOMIC DNA]</scope>
    <source>
        <strain>ATCC 43587 / DSM 3638 / JCM 8422 / Vc1</strain>
    </source>
</reference>
<reference key="2">
    <citation type="unpublished observations" date="2023-10">
        <authorList>
            <person name="Leibundgut M.A."/>
            <person name="Ban N."/>
        </authorList>
    </citation>
    <scope>REVISION OF SUBUNIT</scope>
    <scope>NOMENCLATURE</scope>
</reference>
<reference evidence="5" key="3">
    <citation type="journal article" date="2013" name="Nucleic Acids Res.">
        <title>Promiscuous behaviour of archaeal ribosomal proteins: implications for eukaryotic ribosome evolution.</title>
        <authorList>
            <person name="Armache J.P."/>
            <person name="Anger A.M."/>
            <person name="Marquez V."/>
            <person name="Franckenberg S."/>
            <person name="Frohlich T."/>
            <person name="Villa E."/>
            <person name="Berninghausen O."/>
            <person name="Thomm M."/>
            <person name="Arnold G.J."/>
            <person name="Beckmann R."/>
            <person name="Wilson D.N."/>
        </authorList>
    </citation>
    <scope>STRUCTURE BY ELECTRON MICROSCOPY (6.60 ANGSTROMS) OF 14-37 IN THE 70S RIBOSOME</scope>
    <scope>SUBUNIT</scope>
</reference>
<reference evidence="6 7" key="4">
    <citation type="journal article" date="2016" name="Nat. Commun.">
        <title>Cryo-EM study of start codon selection during archaeal translation initiation.</title>
        <authorList>
            <person name="Coureux P.D."/>
            <person name="Lazennec-Schurdevin C."/>
            <person name="Monestier A."/>
            <person name="Larquet E."/>
            <person name="Cladiere L."/>
            <person name="Klaholz B.P."/>
            <person name="Schmitt E."/>
            <person name="Mechulam Y."/>
        </authorList>
    </citation>
    <scope>STRUCTURE BY ELECTRON MICROSCOPY (5.34 ANGSTROMS) OF 14-35 IN THE 70S RIBOSOME</scope>
    <scope>SUBUNIT</scope>
</reference>
<organism>
    <name type="scientific">Pyrococcus furiosus (strain ATCC 43587 / DSM 3638 / JCM 8422 / Vc1)</name>
    <dbReference type="NCBI Taxonomy" id="186497"/>
    <lineage>
        <taxon>Archaea</taxon>
        <taxon>Methanobacteriati</taxon>
        <taxon>Methanobacteriota</taxon>
        <taxon>Thermococci</taxon>
        <taxon>Thermococcales</taxon>
        <taxon>Thermococcaceae</taxon>
        <taxon>Pyrococcus</taxon>
    </lineage>
</organism>
<proteinExistence type="evidence at protein level"/>
<name>RS32_PYRFU</name>
<comment type="subunit">
    <text evidence="3 4">Part of the small ribosomal subunit.</text>
</comment>
<comment type="miscellaneous">
    <text evidence="3 4">Initially thought to be part of the large ribosomal subunit. Crystal structures show eS32/eL41 to be a small ribosomal subunit forming a bridge at the interface of the 2 subunits.</text>
</comment>
<comment type="similarity">
    <text evidence="2">Belongs to the eukaryotic ribosomal protein eS32 family.</text>
</comment>